<name>TGT_THISH</name>
<gene>
    <name evidence="1" type="primary">tgt</name>
    <name type="ordered locus">Tgr7_2068</name>
</gene>
<evidence type="ECO:0000255" key="1">
    <source>
        <dbReference type="HAMAP-Rule" id="MF_00168"/>
    </source>
</evidence>
<reference key="1">
    <citation type="journal article" date="2011" name="Stand. Genomic Sci.">
        <title>Complete genome sequence of 'Thioalkalivibrio sulfidophilus' HL-EbGr7.</title>
        <authorList>
            <person name="Muyzer G."/>
            <person name="Sorokin D.Y."/>
            <person name="Mavromatis K."/>
            <person name="Lapidus A."/>
            <person name="Clum A."/>
            <person name="Ivanova N."/>
            <person name="Pati A."/>
            <person name="d'Haeseleer P."/>
            <person name="Woyke T."/>
            <person name="Kyrpides N.C."/>
        </authorList>
    </citation>
    <scope>NUCLEOTIDE SEQUENCE [LARGE SCALE GENOMIC DNA]</scope>
    <source>
        <strain>HL-EbGR7</strain>
    </source>
</reference>
<comment type="function">
    <text evidence="1">Catalyzes the base-exchange of a guanine (G) residue with the queuine precursor 7-aminomethyl-7-deazaguanine (PreQ1) at position 34 (anticodon wobble position) in tRNAs with GU(N) anticodons (tRNA-Asp, -Asn, -His and -Tyr). Catalysis occurs through a double-displacement mechanism. The nucleophile active site attacks the C1' of nucleotide 34 to detach the guanine base from the RNA, forming a covalent enzyme-RNA intermediate. The proton acceptor active site deprotonates the incoming PreQ1, allowing a nucleophilic attack on the C1' of the ribose to form the product. After dissociation, two additional enzymatic reactions on the tRNA convert PreQ1 to queuine (Q), resulting in the hypermodified nucleoside queuosine (7-(((4,5-cis-dihydroxy-2-cyclopenten-1-yl)amino)methyl)-7-deazaguanosine).</text>
</comment>
<comment type="catalytic activity">
    <reaction evidence="1">
        <text>7-aminomethyl-7-carbaguanine + guanosine(34) in tRNA = 7-aminomethyl-7-carbaguanosine(34) in tRNA + guanine</text>
        <dbReference type="Rhea" id="RHEA:24104"/>
        <dbReference type="Rhea" id="RHEA-COMP:10341"/>
        <dbReference type="Rhea" id="RHEA-COMP:10342"/>
        <dbReference type="ChEBI" id="CHEBI:16235"/>
        <dbReference type="ChEBI" id="CHEBI:58703"/>
        <dbReference type="ChEBI" id="CHEBI:74269"/>
        <dbReference type="ChEBI" id="CHEBI:82833"/>
        <dbReference type="EC" id="2.4.2.29"/>
    </reaction>
</comment>
<comment type="cofactor">
    <cofactor evidence="1">
        <name>Zn(2+)</name>
        <dbReference type="ChEBI" id="CHEBI:29105"/>
    </cofactor>
    <text evidence="1">Binds 1 zinc ion per subunit.</text>
</comment>
<comment type="pathway">
    <text evidence="1">tRNA modification; tRNA-queuosine biosynthesis.</text>
</comment>
<comment type="subunit">
    <text evidence="1">Homodimer. Within each dimer, one monomer is responsible for RNA recognition and catalysis, while the other monomer binds to the replacement base PreQ1.</text>
</comment>
<comment type="similarity">
    <text evidence="1">Belongs to the queuine tRNA-ribosyltransferase family.</text>
</comment>
<organism>
    <name type="scientific">Thioalkalivibrio sulfidiphilus (strain HL-EbGR7)</name>
    <dbReference type="NCBI Taxonomy" id="396588"/>
    <lineage>
        <taxon>Bacteria</taxon>
        <taxon>Pseudomonadati</taxon>
        <taxon>Pseudomonadota</taxon>
        <taxon>Gammaproteobacteria</taxon>
        <taxon>Chromatiales</taxon>
        <taxon>Ectothiorhodospiraceae</taxon>
        <taxon>Thioalkalivibrio</taxon>
    </lineage>
</organism>
<sequence>MKFELIANDGAARRGRLSFPRGTVETPAFMPVGTYGTVKAMTPEELEGIGAEIILGNTFHLMLRPGTEVIQLHGDLHDFMHWEKPILTDSGGFQVFSLADLRKITEEGVKFRSPVDGSEILLTPERSMDVQRALGSDIVMIFDECTPYPATEDQARESMELSLRWAARSKVAHGDSPSALFGIVQGGMYPALRSRSLEGLVDVGFDGYAIGGLSVGEGMEERHHVLDHLMPEMPAERPRYLMGVGKPEDIVEAVRRGVDMFDCVIPTRNARNGFLYTREGVMRIRNSRFRTDTGPIDESCDCYTCRNYSRAYLKHLDKCNEILGARLNTIHNLHYYQTLMRELRGAIAEGRLEAWVAEFYGRRSQAVPSVP</sequence>
<accession>B8GTQ4</accession>
<feature type="chain" id="PRO_1000198035" description="Queuine tRNA-ribosyltransferase">
    <location>
        <begin position="1"/>
        <end position="371"/>
    </location>
</feature>
<feature type="region of interest" description="RNA binding" evidence="1">
    <location>
        <begin position="243"/>
        <end position="249"/>
    </location>
</feature>
<feature type="region of interest" description="RNA binding; important for wobble base 34 recognition" evidence="1">
    <location>
        <begin position="267"/>
        <end position="271"/>
    </location>
</feature>
<feature type="active site" description="Proton acceptor" evidence="1">
    <location>
        <position position="89"/>
    </location>
</feature>
<feature type="active site" description="Nucleophile" evidence="1">
    <location>
        <position position="262"/>
    </location>
</feature>
<feature type="binding site" evidence="1">
    <location>
        <begin position="89"/>
        <end position="93"/>
    </location>
    <ligand>
        <name>substrate</name>
    </ligand>
</feature>
<feature type="binding site" evidence="1">
    <location>
        <position position="143"/>
    </location>
    <ligand>
        <name>substrate</name>
    </ligand>
</feature>
<feature type="binding site" evidence="1">
    <location>
        <position position="185"/>
    </location>
    <ligand>
        <name>substrate</name>
    </ligand>
</feature>
<feature type="binding site" evidence="1">
    <location>
        <position position="212"/>
    </location>
    <ligand>
        <name>substrate</name>
    </ligand>
</feature>
<feature type="binding site" evidence="1">
    <location>
        <position position="300"/>
    </location>
    <ligand>
        <name>Zn(2+)</name>
        <dbReference type="ChEBI" id="CHEBI:29105"/>
    </ligand>
</feature>
<feature type="binding site" evidence="1">
    <location>
        <position position="302"/>
    </location>
    <ligand>
        <name>Zn(2+)</name>
        <dbReference type="ChEBI" id="CHEBI:29105"/>
    </ligand>
</feature>
<feature type="binding site" evidence="1">
    <location>
        <position position="305"/>
    </location>
    <ligand>
        <name>Zn(2+)</name>
        <dbReference type="ChEBI" id="CHEBI:29105"/>
    </ligand>
</feature>
<feature type="binding site" evidence="1">
    <location>
        <position position="331"/>
    </location>
    <ligand>
        <name>Zn(2+)</name>
        <dbReference type="ChEBI" id="CHEBI:29105"/>
    </ligand>
</feature>
<keyword id="KW-0328">Glycosyltransferase</keyword>
<keyword id="KW-0479">Metal-binding</keyword>
<keyword id="KW-0671">Queuosine biosynthesis</keyword>
<keyword id="KW-1185">Reference proteome</keyword>
<keyword id="KW-0808">Transferase</keyword>
<keyword id="KW-0819">tRNA processing</keyword>
<keyword id="KW-0862">Zinc</keyword>
<proteinExistence type="inferred from homology"/>
<dbReference type="EC" id="2.4.2.29" evidence="1"/>
<dbReference type="EMBL" id="CP001339">
    <property type="protein sequence ID" value="ACL73148.1"/>
    <property type="molecule type" value="Genomic_DNA"/>
</dbReference>
<dbReference type="RefSeq" id="WP_012638627.1">
    <property type="nucleotide sequence ID" value="NC_011901.1"/>
</dbReference>
<dbReference type="SMR" id="B8GTQ4"/>
<dbReference type="STRING" id="396588.Tgr7_2068"/>
<dbReference type="KEGG" id="tgr:Tgr7_2068"/>
<dbReference type="eggNOG" id="COG0343">
    <property type="taxonomic scope" value="Bacteria"/>
</dbReference>
<dbReference type="HOGENOM" id="CLU_022060_0_1_6"/>
<dbReference type="OrthoDB" id="9805417at2"/>
<dbReference type="UniPathway" id="UPA00392"/>
<dbReference type="Proteomes" id="UP000002383">
    <property type="component" value="Chromosome"/>
</dbReference>
<dbReference type="GO" id="GO:0005829">
    <property type="term" value="C:cytosol"/>
    <property type="evidence" value="ECO:0007669"/>
    <property type="project" value="TreeGrafter"/>
</dbReference>
<dbReference type="GO" id="GO:0046872">
    <property type="term" value="F:metal ion binding"/>
    <property type="evidence" value="ECO:0007669"/>
    <property type="project" value="UniProtKB-KW"/>
</dbReference>
<dbReference type="GO" id="GO:0008479">
    <property type="term" value="F:tRNA-guanosine(34) queuine transglycosylase activity"/>
    <property type="evidence" value="ECO:0007669"/>
    <property type="project" value="UniProtKB-UniRule"/>
</dbReference>
<dbReference type="GO" id="GO:0008616">
    <property type="term" value="P:queuosine biosynthetic process"/>
    <property type="evidence" value="ECO:0007669"/>
    <property type="project" value="UniProtKB-UniRule"/>
</dbReference>
<dbReference type="GO" id="GO:0002099">
    <property type="term" value="P:tRNA wobble guanine modification"/>
    <property type="evidence" value="ECO:0007669"/>
    <property type="project" value="TreeGrafter"/>
</dbReference>
<dbReference type="GO" id="GO:0101030">
    <property type="term" value="P:tRNA-guanine transglycosylation"/>
    <property type="evidence" value="ECO:0007669"/>
    <property type="project" value="InterPro"/>
</dbReference>
<dbReference type="FunFam" id="3.20.20.105:FF:000001">
    <property type="entry name" value="Queuine tRNA-ribosyltransferase"/>
    <property type="match status" value="1"/>
</dbReference>
<dbReference type="Gene3D" id="3.20.20.105">
    <property type="entry name" value="Queuine tRNA-ribosyltransferase-like"/>
    <property type="match status" value="1"/>
</dbReference>
<dbReference type="HAMAP" id="MF_00168">
    <property type="entry name" value="Q_tRNA_Tgt"/>
    <property type="match status" value="1"/>
</dbReference>
<dbReference type="InterPro" id="IPR050076">
    <property type="entry name" value="ArchSynthase1/Queuine_TRR"/>
</dbReference>
<dbReference type="InterPro" id="IPR004803">
    <property type="entry name" value="TGT"/>
</dbReference>
<dbReference type="InterPro" id="IPR036511">
    <property type="entry name" value="TGT-like_sf"/>
</dbReference>
<dbReference type="InterPro" id="IPR002616">
    <property type="entry name" value="tRNA_ribo_trans-like"/>
</dbReference>
<dbReference type="NCBIfam" id="TIGR00430">
    <property type="entry name" value="Q_tRNA_tgt"/>
    <property type="match status" value="1"/>
</dbReference>
<dbReference type="NCBIfam" id="TIGR00449">
    <property type="entry name" value="tgt_general"/>
    <property type="match status" value="1"/>
</dbReference>
<dbReference type="PANTHER" id="PTHR46499">
    <property type="entry name" value="QUEUINE TRNA-RIBOSYLTRANSFERASE"/>
    <property type="match status" value="1"/>
</dbReference>
<dbReference type="PANTHER" id="PTHR46499:SF1">
    <property type="entry name" value="QUEUINE TRNA-RIBOSYLTRANSFERASE"/>
    <property type="match status" value="1"/>
</dbReference>
<dbReference type="Pfam" id="PF01702">
    <property type="entry name" value="TGT"/>
    <property type="match status" value="1"/>
</dbReference>
<dbReference type="SUPFAM" id="SSF51713">
    <property type="entry name" value="tRNA-guanine transglycosylase"/>
    <property type="match status" value="1"/>
</dbReference>
<protein>
    <recommendedName>
        <fullName evidence="1">Queuine tRNA-ribosyltransferase</fullName>
        <ecNumber evidence="1">2.4.2.29</ecNumber>
    </recommendedName>
    <alternativeName>
        <fullName evidence="1">Guanine insertion enzyme</fullName>
    </alternativeName>
    <alternativeName>
        <fullName evidence="1">tRNA-guanine transglycosylase</fullName>
    </alternativeName>
</protein>